<name>Y781_SACS2</name>
<proteinExistence type="inferred from homology"/>
<keyword id="KW-1185">Reference proteome</keyword>
<protein>
    <recommendedName>
        <fullName>UPF0148 protein SSO0781</fullName>
    </recommendedName>
</protein>
<reference key="1">
    <citation type="journal article" date="2000" name="Genome">
        <title>Gene content and organization of a 281-kbp contig from the genome of the extremely thermophilic archaeon, Sulfolobus solfataricus P2.</title>
        <authorList>
            <person name="Charlebois R.L."/>
            <person name="Singh R.K."/>
            <person name="Chan-Weiher C.C.-Y."/>
            <person name="Allard G."/>
            <person name="Chow C."/>
            <person name="Confalonieri F."/>
            <person name="Curtis B."/>
            <person name="Duguet M."/>
            <person name="Erauso G."/>
            <person name="Faguy D."/>
            <person name="Gaasterland T."/>
            <person name="Garrett R.A."/>
            <person name="Gordon P."/>
            <person name="Jeffries A.C."/>
            <person name="Kozera C."/>
            <person name="Kushwaha N."/>
            <person name="Lafleur E."/>
            <person name="Medina N."/>
            <person name="Peng X."/>
            <person name="Penny S.L."/>
            <person name="She Q."/>
            <person name="St Jean A."/>
            <person name="van der Oost J."/>
            <person name="Young F."/>
            <person name="Zivanovic Y."/>
            <person name="Doolittle W.F."/>
            <person name="Ragan M.A."/>
            <person name="Sensen C.W."/>
        </authorList>
    </citation>
    <scope>NUCLEOTIDE SEQUENCE [LARGE SCALE GENOMIC DNA]</scope>
    <source>
        <strain>ATCC 35092 / DSM 1617 / JCM 11322 / P2</strain>
    </source>
</reference>
<reference key="2">
    <citation type="journal article" date="2001" name="Proc. Natl. Acad. Sci. U.S.A.">
        <title>The complete genome of the crenarchaeon Sulfolobus solfataricus P2.</title>
        <authorList>
            <person name="She Q."/>
            <person name="Singh R.K."/>
            <person name="Confalonieri F."/>
            <person name="Zivanovic Y."/>
            <person name="Allard G."/>
            <person name="Awayez M.J."/>
            <person name="Chan-Weiher C.C.-Y."/>
            <person name="Clausen I.G."/>
            <person name="Curtis B.A."/>
            <person name="De Moors A."/>
            <person name="Erauso G."/>
            <person name="Fletcher C."/>
            <person name="Gordon P.M.K."/>
            <person name="Heikamp-de Jong I."/>
            <person name="Jeffries A.C."/>
            <person name="Kozera C.J."/>
            <person name="Medina N."/>
            <person name="Peng X."/>
            <person name="Thi-Ngoc H.P."/>
            <person name="Redder P."/>
            <person name="Schenk M.E."/>
            <person name="Theriault C."/>
            <person name="Tolstrup N."/>
            <person name="Charlebois R.L."/>
            <person name="Doolittle W.F."/>
            <person name="Duguet M."/>
            <person name="Gaasterland T."/>
            <person name="Garrett R.A."/>
            <person name="Ragan M.A."/>
            <person name="Sensen C.W."/>
            <person name="Van der Oost J."/>
        </authorList>
    </citation>
    <scope>NUCLEOTIDE SEQUENCE [LARGE SCALE GENOMIC DNA]</scope>
    <source>
        <strain>ATCC 35092 / DSM 1617 / JCM 11322 / P2</strain>
    </source>
</reference>
<accession>Q9UXG8</accession>
<feature type="chain" id="PRO_0000159860" description="UPF0148 protein SSO0781">
    <location>
        <begin position="1"/>
        <end position="118"/>
    </location>
</feature>
<gene>
    <name type="ordered locus">SSO0781</name>
    <name type="ORF">C40_017</name>
</gene>
<organism>
    <name type="scientific">Saccharolobus solfataricus (strain ATCC 35092 / DSM 1617 / JCM 11322 / P2)</name>
    <name type="common">Sulfolobus solfataricus</name>
    <dbReference type="NCBI Taxonomy" id="273057"/>
    <lineage>
        <taxon>Archaea</taxon>
        <taxon>Thermoproteota</taxon>
        <taxon>Thermoprotei</taxon>
        <taxon>Sulfolobales</taxon>
        <taxon>Sulfolobaceae</taxon>
        <taxon>Saccharolobus</taxon>
    </lineage>
</organism>
<dbReference type="EMBL" id="Y18930">
    <property type="protein sequence ID" value="CAB57522.1"/>
    <property type="molecule type" value="Genomic_DNA"/>
</dbReference>
<dbReference type="EMBL" id="AE006641">
    <property type="protein sequence ID" value="AAK41078.1"/>
    <property type="molecule type" value="Genomic_DNA"/>
</dbReference>
<dbReference type="PIR" id="G90227">
    <property type="entry name" value="G90227"/>
</dbReference>
<dbReference type="RefSeq" id="WP_010923073.1">
    <property type="nucleotide sequence ID" value="NC_002754.1"/>
</dbReference>
<dbReference type="SMR" id="Q9UXG8"/>
<dbReference type="PaxDb" id="273057-SSO0781"/>
<dbReference type="EnsemblBacteria" id="AAK41078">
    <property type="protein sequence ID" value="AAK41078"/>
    <property type="gene ID" value="SSO0781"/>
</dbReference>
<dbReference type="GeneID" id="84061674"/>
<dbReference type="KEGG" id="sso:SSO0781"/>
<dbReference type="PATRIC" id="fig|273057.12.peg.782"/>
<dbReference type="eggNOG" id="arCOG00578">
    <property type="taxonomic scope" value="Archaea"/>
</dbReference>
<dbReference type="HOGENOM" id="CLU_142653_1_0_2"/>
<dbReference type="InParanoid" id="Q9UXG8"/>
<dbReference type="PhylomeDB" id="Q9UXG8"/>
<dbReference type="Proteomes" id="UP000001974">
    <property type="component" value="Chromosome"/>
</dbReference>
<dbReference type="HAMAP" id="MF_00343">
    <property type="entry name" value="UPF0148"/>
    <property type="match status" value="1"/>
</dbReference>
<dbReference type="InterPro" id="IPR009563">
    <property type="entry name" value="SSSCA1"/>
</dbReference>
<dbReference type="InterPro" id="IPR022954">
    <property type="entry name" value="UPF0148"/>
</dbReference>
<dbReference type="NCBIfam" id="NF001644">
    <property type="entry name" value="PRK00420.1-1"/>
    <property type="match status" value="1"/>
</dbReference>
<dbReference type="NCBIfam" id="NF001647">
    <property type="entry name" value="PRK00420.1-4"/>
    <property type="match status" value="1"/>
</dbReference>
<dbReference type="Pfam" id="PF06677">
    <property type="entry name" value="Auto_anti-p27"/>
    <property type="match status" value="1"/>
</dbReference>
<sequence length="118" mass="13445">MTNESEVGVKKAAELLRQGATMLEEACPICKMPLFKLKNGDVVCPVHGKVYIVKSDDEEKIVKRNLQLDEIESILIDGLYLSAKKMKEDPLDSERIIQIIRYLDALERLRKIKINSSE</sequence>
<comment type="similarity">
    <text evidence="1">Belongs to the UPF0148 family.</text>
</comment>
<evidence type="ECO:0000305" key="1"/>